<comment type="function">
    <text evidence="1">Binds 16S rRNA, required for the assembly of 30S particles and may also be responsible for determining the conformation of the 16S rRNA at the A site.</text>
</comment>
<comment type="cofactor">
    <cofactor evidence="1">
        <name>Zn(2+)</name>
        <dbReference type="ChEBI" id="CHEBI:29105"/>
    </cofactor>
    <text evidence="1">Binds 1 zinc ion per subunit.</text>
</comment>
<comment type="subunit">
    <text evidence="1">Part of the 30S ribosomal subunit. Contacts proteins S3 and S10.</text>
</comment>
<comment type="similarity">
    <text evidence="1">Belongs to the universal ribosomal protein uS14 family. Zinc-binding uS14 subfamily.</text>
</comment>
<sequence>MARKAIIEKWSKTPKYKTRAYTRCRICGRPHAVLRKYGVCRICFRELAYKGEIPGCRKASW</sequence>
<organism>
    <name type="scientific">Clostridium botulinum (strain Eklund 17B / Type B)</name>
    <dbReference type="NCBI Taxonomy" id="935198"/>
    <lineage>
        <taxon>Bacteria</taxon>
        <taxon>Bacillati</taxon>
        <taxon>Bacillota</taxon>
        <taxon>Clostridia</taxon>
        <taxon>Eubacteriales</taxon>
        <taxon>Clostridiaceae</taxon>
        <taxon>Clostridium</taxon>
    </lineage>
</organism>
<accession>B2TII8</accession>
<name>RS14Z_CLOBB</name>
<keyword id="KW-0479">Metal-binding</keyword>
<keyword id="KW-0687">Ribonucleoprotein</keyword>
<keyword id="KW-0689">Ribosomal protein</keyword>
<keyword id="KW-0694">RNA-binding</keyword>
<keyword id="KW-0699">rRNA-binding</keyword>
<keyword id="KW-0862">Zinc</keyword>
<gene>
    <name evidence="1" type="primary">rpsZ</name>
    <name evidence="1" type="synonym">rpsN</name>
    <name type="ordered locus">CLL_A0251</name>
</gene>
<evidence type="ECO:0000255" key="1">
    <source>
        <dbReference type="HAMAP-Rule" id="MF_01364"/>
    </source>
</evidence>
<evidence type="ECO:0000305" key="2"/>
<reference key="1">
    <citation type="submission" date="2008-04" db="EMBL/GenBank/DDBJ databases">
        <title>Complete sequence of Clostridium botulinum strain Eklund.</title>
        <authorList>
            <person name="Brinkac L.M."/>
            <person name="Brown J.L."/>
            <person name="Bruce D."/>
            <person name="Detter C."/>
            <person name="Munk C."/>
            <person name="Smith L.A."/>
            <person name="Smith T.J."/>
            <person name="Sutton G."/>
            <person name="Brettin T.S."/>
        </authorList>
    </citation>
    <scope>NUCLEOTIDE SEQUENCE [LARGE SCALE GENOMIC DNA]</scope>
    <source>
        <strain>Eklund 17B / Type B</strain>
    </source>
</reference>
<feature type="chain" id="PRO_1000143891" description="Small ribosomal subunit protein uS14">
    <location>
        <begin position="1"/>
        <end position="61"/>
    </location>
</feature>
<feature type="binding site" evidence="1">
    <location>
        <position position="24"/>
    </location>
    <ligand>
        <name>Zn(2+)</name>
        <dbReference type="ChEBI" id="CHEBI:29105"/>
    </ligand>
</feature>
<feature type="binding site" evidence="1">
    <location>
        <position position="27"/>
    </location>
    <ligand>
        <name>Zn(2+)</name>
        <dbReference type="ChEBI" id="CHEBI:29105"/>
    </ligand>
</feature>
<feature type="binding site" evidence="1">
    <location>
        <position position="40"/>
    </location>
    <ligand>
        <name>Zn(2+)</name>
        <dbReference type="ChEBI" id="CHEBI:29105"/>
    </ligand>
</feature>
<feature type="binding site" evidence="1">
    <location>
        <position position="43"/>
    </location>
    <ligand>
        <name>Zn(2+)</name>
        <dbReference type="ChEBI" id="CHEBI:29105"/>
    </ligand>
</feature>
<proteinExistence type="inferred from homology"/>
<dbReference type="EMBL" id="CP001056">
    <property type="protein sequence ID" value="ACD23312.1"/>
    <property type="molecule type" value="Genomic_DNA"/>
</dbReference>
<dbReference type="SMR" id="B2TII8"/>
<dbReference type="KEGG" id="cbk:CLL_A0251"/>
<dbReference type="PATRIC" id="fig|935198.13.peg.226"/>
<dbReference type="HOGENOM" id="CLU_139869_3_0_9"/>
<dbReference type="Proteomes" id="UP000001195">
    <property type="component" value="Chromosome"/>
</dbReference>
<dbReference type="GO" id="GO:0005737">
    <property type="term" value="C:cytoplasm"/>
    <property type="evidence" value="ECO:0007669"/>
    <property type="project" value="UniProtKB-ARBA"/>
</dbReference>
<dbReference type="GO" id="GO:0015935">
    <property type="term" value="C:small ribosomal subunit"/>
    <property type="evidence" value="ECO:0007669"/>
    <property type="project" value="TreeGrafter"/>
</dbReference>
<dbReference type="GO" id="GO:0019843">
    <property type="term" value="F:rRNA binding"/>
    <property type="evidence" value="ECO:0007669"/>
    <property type="project" value="UniProtKB-UniRule"/>
</dbReference>
<dbReference type="GO" id="GO:0003735">
    <property type="term" value="F:structural constituent of ribosome"/>
    <property type="evidence" value="ECO:0007669"/>
    <property type="project" value="InterPro"/>
</dbReference>
<dbReference type="GO" id="GO:0008270">
    <property type="term" value="F:zinc ion binding"/>
    <property type="evidence" value="ECO:0007669"/>
    <property type="project" value="UniProtKB-UniRule"/>
</dbReference>
<dbReference type="GO" id="GO:0006412">
    <property type="term" value="P:translation"/>
    <property type="evidence" value="ECO:0007669"/>
    <property type="project" value="UniProtKB-UniRule"/>
</dbReference>
<dbReference type="FunFam" id="4.10.830.10:FF:000001">
    <property type="entry name" value="30S ribosomal protein S14 type Z"/>
    <property type="match status" value="1"/>
</dbReference>
<dbReference type="Gene3D" id="4.10.830.10">
    <property type="entry name" value="30s Ribosomal Protein S14, Chain N"/>
    <property type="match status" value="1"/>
</dbReference>
<dbReference type="HAMAP" id="MF_01364_B">
    <property type="entry name" value="Ribosomal_uS14_2_B"/>
    <property type="match status" value="1"/>
</dbReference>
<dbReference type="InterPro" id="IPR001209">
    <property type="entry name" value="Ribosomal_uS14"/>
</dbReference>
<dbReference type="InterPro" id="IPR023053">
    <property type="entry name" value="Ribosomal_uS14_bact"/>
</dbReference>
<dbReference type="InterPro" id="IPR043140">
    <property type="entry name" value="Ribosomal_uS14_sf"/>
</dbReference>
<dbReference type="NCBIfam" id="NF005974">
    <property type="entry name" value="PRK08061.1"/>
    <property type="match status" value="1"/>
</dbReference>
<dbReference type="PANTHER" id="PTHR19836">
    <property type="entry name" value="30S RIBOSOMAL PROTEIN S14"/>
    <property type="match status" value="1"/>
</dbReference>
<dbReference type="PANTHER" id="PTHR19836:SF19">
    <property type="entry name" value="SMALL RIBOSOMAL SUBUNIT PROTEIN US14M"/>
    <property type="match status" value="1"/>
</dbReference>
<dbReference type="Pfam" id="PF00253">
    <property type="entry name" value="Ribosomal_S14"/>
    <property type="match status" value="1"/>
</dbReference>
<dbReference type="SUPFAM" id="SSF57716">
    <property type="entry name" value="Glucocorticoid receptor-like (DNA-binding domain)"/>
    <property type="match status" value="1"/>
</dbReference>
<protein>
    <recommendedName>
        <fullName evidence="1">Small ribosomal subunit protein uS14</fullName>
    </recommendedName>
    <alternativeName>
        <fullName evidence="2">30S ribosomal protein S14 type Z</fullName>
    </alternativeName>
</protein>